<sequence length="661" mass="75090">MELKKDSNAVAIDMLLIVHSEKRRAAQATHLDPQANPGALLQNRGGFQGVRNGIRKWQELEENSFQGNLPEKQCLQQPQVITSYDNQGTQLTVEIHPQDAMPQLLKKFSLAKRLQGDKNGNMRPRQPGGKDAHAYPWDRSSLKSMPLDLRLFEKLDASASQVTVKSGLNELVSDLLQEAHSDLERVRAIWIWICHHIEYDVEAAQEKDRQAFKPTDILRTQKTNCDGYAGLFERMCRVAGVQCVTVPGYSKGFGYQTGQSFSGEFDHAWNAVYLEGRWHLVDSTWGSGLVDTTTSKFTFLYNEFYFLTHPALFIEDHFPDNKNWQLLKPPQSLRQFENSMYHKSEFYNKGMLSAHPETSMIRTVNGKATITIESRAPTLFMFMLNGKQEHGLLSLRKNGMKLEVYPPTMGTHKLQIFAKGNSEIYSSVLEYTLKCNYVDFSVQLPSELHQPVGPSWFSEQMGITKPSHSDPIIHTSDGRCAISFSVEEGVSVLASLHGDDGPITEETQRRYIFQLNRGKRTELKVQLPHAGKFALKIFVKKRQEQGNFIFVFNYLLCCANTKVNWPMFPESFGNWGQDNELLEPLSGVLPANRNVAFKLKLHGIAKALVKGQDTWPLTLNPEGYWEGSCNTAGCQEVYVMVLENANHNFYSYILKYKVNDQ</sequence>
<accession>Q8C8H8</accession>
<accession>Q9EPK9</accession>
<feature type="chain" id="PRO_0000288605" description="Kyphoscoliosis peptidase">
    <location>
        <begin position="1"/>
        <end position="661"/>
    </location>
</feature>
<feature type="region of interest" description="Disordered" evidence="2">
    <location>
        <begin position="116"/>
        <end position="137"/>
    </location>
</feature>
<feature type="active site" evidence="1">
    <location>
        <position position="225"/>
    </location>
</feature>
<feature type="active site" evidence="1">
    <location>
        <position position="267"/>
    </location>
</feature>
<feature type="active site" evidence="1">
    <location>
        <position position="282"/>
    </location>
</feature>
<feature type="splice variant" id="VSP_025723" description="In isoform 2." evidence="6">
    <original>F</original>
    <variation>LDL</variation>
    <location>
        <position position="299"/>
    </location>
</feature>
<feature type="sequence conflict" description="In Ref. 1; CAC12744." evidence="7" ref="1">
    <original>I</original>
    <variation>V</variation>
    <location>
        <position position="217"/>
    </location>
</feature>
<feature type="sequence conflict" description="In Ref. 1; CAC12744." evidence="7" ref="1">
    <original>F</original>
    <variation>I</variation>
    <location>
        <position position="440"/>
    </location>
</feature>
<feature type="sequence conflict" description="In Ref. 1; CAC12744." evidence="7" ref="1">
    <original>V</original>
    <variation>I</variation>
    <location>
        <position position="595"/>
    </location>
</feature>
<proteinExistence type="evidence at protein level"/>
<organism>
    <name type="scientific">Mus musculus</name>
    <name type="common">Mouse</name>
    <dbReference type="NCBI Taxonomy" id="10090"/>
    <lineage>
        <taxon>Eukaryota</taxon>
        <taxon>Metazoa</taxon>
        <taxon>Chordata</taxon>
        <taxon>Craniata</taxon>
        <taxon>Vertebrata</taxon>
        <taxon>Euteleostomi</taxon>
        <taxon>Mammalia</taxon>
        <taxon>Eutheria</taxon>
        <taxon>Euarchontoglires</taxon>
        <taxon>Glires</taxon>
        <taxon>Rodentia</taxon>
        <taxon>Myomorpha</taxon>
        <taxon>Muroidea</taxon>
        <taxon>Muridae</taxon>
        <taxon>Murinae</taxon>
        <taxon>Mus</taxon>
        <taxon>Mus</taxon>
    </lineage>
</organism>
<keyword id="KW-0025">Alternative splicing</keyword>
<keyword id="KW-0963">Cytoplasm</keyword>
<keyword id="KW-0206">Cytoskeleton</keyword>
<keyword id="KW-0378">Hydrolase</keyword>
<keyword id="KW-0645">Protease</keyword>
<keyword id="KW-1185">Reference proteome</keyword>
<reference key="1">
    <citation type="journal article" date="2001" name="Hum. Mol. Genet.">
        <title>The kyphoscoliosis (ky) mouse is deficient in hypertrophic responses and is caused by a mutation in a novel muscle-specific protein.</title>
        <authorList>
            <person name="Blanco G."/>
            <person name="Coulton G.R."/>
            <person name="Biggin A."/>
            <person name="Grainge C."/>
            <person name="Moss J."/>
            <person name="Barrett M."/>
            <person name="Berquin A."/>
            <person name="Marechal G."/>
            <person name="Skynner M."/>
            <person name="van Mier P."/>
            <person name="Nikitopoulou A."/>
            <person name="Kraus M."/>
            <person name="Ponting C.P."/>
            <person name="Mason R.M."/>
            <person name="Brown S.D.M."/>
        </authorList>
    </citation>
    <scope>NUCLEOTIDE SEQUENCE [MRNA] (ISOFORM 2)</scope>
    <scope>FUNCTION</scope>
    <scope>TISSUE SPECIFICITY</scope>
    <scope>DISRUPTION PHENOTYPE</scope>
    <source>
        <tissue>Muscle</tissue>
    </source>
</reference>
<reference key="2">
    <citation type="journal article" date="2005" name="Science">
        <title>The transcriptional landscape of the mammalian genome.</title>
        <authorList>
            <person name="Carninci P."/>
            <person name="Kasukawa T."/>
            <person name="Katayama S."/>
            <person name="Gough J."/>
            <person name="Frith M.C."/>
            <person name="Maeda N."/>
            <person name="Oyama R."/>
            <person name="Ravasi T."/>
            <person name="Lenhard B."/>
            <person name="Wells C."/>
            <person name="Kodzius R."/>
            <person name="Shimokawa K."/>
            <person name="Bajic V.B."/>
            <person name="Brenner S.E."/>
            <person name="Batalov S."/>
            <person name="Forrest A.R."/>
            <person name="Zavolan M."/>
            <person name="Davis M.J."/>
            <person name="Wilming L.G."/>
            <person name="Aidinis V."/>
            <person name="Allen J.E."/>
            <person name="Ambesi-Impiombato A."/>
            <person name="Apweiler R."/>
            <person name="Aturaliya R.N."/>
            <person name="Bailey T.L."/>
            <person name="Bansal M."/>
            <person name="Baxter L."/>
            <person name="Beisel K.W."/>
            <person name="Bersano T."/>
            <person name="Bono H."/>
            <person name="Chalk A.M."/>
            <person name="Chiu K.P."/>
            <person name="Choudhary V."/>
            <person name="Christoffels A."/>
            <person name="Clutterbuck D.R."/>
            <person name="Crowe M.L."/>
            <person name="Dalla E."/>
            <person name="Dalrymple B.P."/>
            <person name="de Bono B."/>
            <person name="Della Gatta G."/>
            <person name="di Bernardo D."/>
            <person name="Down T."/>
            <person name="Engstrom P."/>
            <person name="Fagiolini M."/>
            <person name="Faulkner G."/>
            <person name="Fletcher C.F."/>
            <person name="Fukushima T."/>
            <person name="Furuno M."/>
            <person name="Futaki S."/>
            <person name="Gariboldi M."/>
            <person name="Georgii-Hemming P."/>
            <person name="Gingeras T.R."/>
            <person name="Gojobori T."/>
            <person name="Green R.E."/>
            <person name="Gustincich S."/>
            <person name="Harbers M."/>
            <person name="Hayashi Y."/>
            <person name="Hensch T.K."/>
            <person name="Hirokawa N."/>
            <person name="Hill D."/>
            <person name="Huminiecki L."/>
            <person name="Iacono M."/>
            <person name="Ikeo K."/>
            <person name="Iwama A."/>
            <person name="Ishikawa T."/>
            <person name="Jakt M."/>
            <person name="Kanapin A."/>
            <person name="Katoh M."/>
            <person name="Kawasawa Y."/>
            <person name="Kelso J."/>
            <person name="Kitamura H."/>
            <person name="Kitano H."/>
            <person name="Kollias G."/>
            <person name="Krishnan S.P."/>
            <person name="Kruger A."/>
            <person name="Kummerfeld S.K."/>
            <person name="Kurochkin I.V."/>
            <person name="Lareau L.F."/>
            <person name="Lazarevic D."/>
            <person name="Lipovich L."/>
            <person name="Liu J."/>
            <person name="Liuni S."/>
            <person name="McWilliam S."/>
            <person name="Madan Babu M."/>
            <person name="Madera M."/>
            <person name="Marchionni L."/>
            <person name="Matsuda H."/>
            <person name="Matsuzawa S."/>
            <person name="Miki H."/>
            <person name="Mignone F."/>
            <person name="Miyake S."/>
            <person name="Morris K."/>
            <person name="Mottagui-Tabar S."/>
            <person name="Mulder N."/>
            <person name="Nakano N."/>
            <person name="Nakauchi H."/>
            <person name="Ng P."/>
            <person name="Nilsson R."/>
            <person name="Nishiguchi S."/>
            <person name="Nishikawa S."/>
            <person name="Nori F."/>
            <person name="Ohara O."/>
            <person name="Okazaki Y."/>
            <person name="Orlando V."/>
            <person name="Pang K.C."/>
            <person name="Pavan W.J."/>
            <person name="Pavesi G."/>
            <person name="Pesole G."/>
            <person name="Petrovsky N."/>
            <person name="Piazza S."/>
            <person name="Reed J."/>
            <person name="Reid J.F."/>
            <person name="Ring B.Z."/>
            <person name="Ringwald M."/>
            <person name="Rost B."/>
            <person name="Ruan Y."/>
            <person name="Salzberg S.L."/>
            <person name="Sandelin A."/>
            <person name="Schneider C."/>
            <person name="Schoenbach C."/>
            <person name="Sekiguchi K."/>
            <person name="Semple C.A."/>
            <person name="Seno S."/>
            <person name="Sessa L."/>
            <person name="Sheng Y."/>
            <person name="Shibata Y."/>
            <person name="Shimada H."/>
            <person name="Shimada K."/>
            <person name="Silva D."/>
            <person name="Sinclair B."/>
            <person name="Sperling S."/>
            <person name="Stupka E."/>
            <person name="Sugiura K."/>
            <person name="Sultana R."/>
            <person name="Takenaka Y."/>
            <person name="Taki K."/>
            <person name="Tammoja K."/>
            <person name="Tan S.L."/>
            <person name="Tang S."/>
            <person name="Taylor M.S."/>
            <person name="Tegner J."/>
            <person name="Teichmann S.A."/>
            <person name="Ueda H.R."/>
            <person name="van Nimwegen E."/>
            <person name="Verardo R."/>
            <person name="Wei C.L."/>
            <person name="Yagi K."/>
            <person name="Yamanishi H."/>
            <person name="Zabarovsky E."/>
            <person name="Zhu S."/>
            <person name="Zimmer A."/>
            <person name="Hide W."/>
            <person name="Bult C."/>
            <person name="Grimmond S.M."/>
            <person name="Teasdale R.D."/>
            <person name="Liu E.T."/>
            <person name="Brusic V."/>
            <person name="Quackenbush J."/>
            <person name="Wahlestedt C."/>
            <person name="Mattick J.S."/>
            <person name="Hume D.A."/>
            <person name="Kai C."/>
            <person name="Sasaki D."/>
            <person name="Tomaru Y."/>
            <person name="Fukuda S."/>
            <person name="Kanamori-Katayama M."/>
            <person name="Suzuki M."/>
            <person name="Aoki J."/>
            <person name="Arakawa T."/>
            <person name="Iida J."/>
            <person name="Imamura K."/>
            <person name="Itoh M."/>
            <person name="Kato T."/>
            <person name="Kawaji H."/>
            <person name="Kawagashira N."/>
            <person name="Kawashima T."/>
            <person name="Kojima M."/>
            <person name="Kondo S."/>
            <person name="Konno H."/>
            <person name="Nakano K."/>
            <person name="Ninomiya N."/>
            <person name="Nishio T."/>
            <person name="Okada M."/>
            <person name="Plessy C."/>
            <person name="Shibata K."/>
            <person name="Shiraki T."/>
            <person name="Suzuki S."/>
            <person name="Tagami M."/>
            <person name="Waki K."/>
            <person name="Watahiki A."/>
            <person name="Okamura-Oho Y."/>
            <person name="Suzuki H."/>
            <person name="Kawai J."/>
            <person name="Hayashizaki Y."/>
        </authorList>
    </citation>
    <scope>NUCLEOTIDE SEQUENCE [LARGE SCALE MRNA] (ISOFORM 1)</scope>
    <source>
        <strain>C57BL/6J</strain>
        <tissue>Cerebellum</tissue>
    </source>
</reference>
<reference key="3">
    <citation type="journal article" date="2004" name="Hum. Mol. Genet.">
        <title>Filamin C interacts with the muscular dystrophy KY protein and is abnormally distributed in mouse KY deficient muscle fibres.</title>
        <authorList>
            <person name="Beatham J."/>
            <person name="Romero R."/>
            <person name="Townsend S.K.M."/>
            <person name="Hacker T."/>
            <person name="van der Ven P.F.M."/>
            <person name="Blanco G."/>
        </authorList>
    </citation>
    <scope>FUNCTION</scope>
    <scope>SUBCELLULAR LOCATION</scope>
    <scope>INTERACTION WITH FLNC AND IGFN1</scope>
</reference>
<reference key="4">
    <citation type="journal article" date="2006" name="Proteomics">
        <title>Proteomic changes in hearts of kyphoscoliosis (ky) mutant mice in the absence of structural pathology: implication for the analysis of early human heart disease.</title>
        <authorList>
            <person name="Hou Y."/>
            <person name="Le Bihan M.-C."/>
            <person name="Vega-Avelaira D."/>
            <person name="Coulton G.R."/>
        </authorList>
    </citation>
    <scope>IDENTIFICATION BY MASS SPECTROMETRY</scope>
</reference>
<reference key="5">
    <citation type="journal article" date="2010" name="Exp. Cell Res.">
        <title>Identification of a Z-band associated protein complex involving KY, FLNC and IGFN1.</title>
        <authorList>
            <person name="Baker J."/>
            <person name="Riley G."/>
            <person name="Romero M.R."/>
            <person name="Haynes A.R."/>
            <person name="Hilton H."/>
            <person name="Simon M."/>
            <person name="Hancock J."/>
            <person name="Tateossian H."/>
            <person name="Ripoll V.M."/>
            <person name="Blanco G."/>
        </authorList>
    </citation>
    <scope>INTERACTION WITH IGFN1</scope>
    <scope>SUBCELLULAR LOCATION</scope>
</reference>
<name>KY_MOUSE</name>
<gene>
    <name evidence="8" type="primary">Ky</name>
</gene>
<comment type="function">
    <text evidence="3 4">Probable cytoskeleton-associated protease required for normal muscle growth. Involved in function, maturation and stabilization of the neuromuscular junction. May act by cleaving muscle-specific proteins such as FLNC.</text>
</comment>
<comment type="subunit">
    <text evidence="4 5">Interacts with IGFN1 and FLNC.</text>
</comment>
<comment type="subcellular location">
    <subcellularLocation>
        <location>Cytoplasm</location>
        <location>Cytoskeleton</location>
    </subcellularLocation>
    <subcellularLocation>
        <location>Cytoplasm</location>
        <location>Myofibril</location>
        <location>Sarcomere</location>
        <location>Z line</location>
    </subcellularLocation>
</comment>
<comment type="alternative products">
    <event type="alternative splicing"/>
    <isoform>
        <id>Q8C8H8-1</id>
        <name>1</name>
        <sequence type="displayed"/>
    </isoform>
    <isoform>
        <id>Q8C8H8-2</id>
        <name>2</name>
        <sequence type="described" ref="VSP_025723"/>
    </isoform>
</comment>
<comment type="tissue specificity">
    <text evidence="3">Specifically expressed in skeletal and cardiac muscle.</text>
</comment>
<comment type="disruption phenotype">
    <text evidence="3">Mice exhibit a primary degenerative myopathy preceding chronic thoraco-lumbar kyphoscoliosis.</text>
</comment>
<comment type="miscellaneous">
    <text>Used as a marker for 'occult' heart disease, as its absence does not cause heart pathology in heart.</text>
</comment>
<comment type="similarity">
    <text evidence="7">Belongs to the transglutaminase-like superfamily.</text>
</comment>
<evidence type="ECO:0000250" key="1"/>
<evidence type="ECO:0000256" key="2">
    <source>
        <dbReference type="SAM" id="MobiDB-lite"/>
    </source>
</evidence>
<evidence type="ECO:0000269" key="3">
    <source>
    </source>
</evidence>
<evidence type="ECO:0000269" key="4">
    <source>
    </source>
</evidence>
<evidence type="ECO:0000269" key="5">
    <source>
    </source>
</evidence>
<evidence type="ECO:0000303" key="6">
    <source>
    </source>
</evidence>
<evidence type="ECO:0000305" key="7"/>
<evidence type="ECO:0000312" key="8">
    <source>
        <dbReference type="MGI" id="MGI:96709"/>
    </source>
</evidence>
<protein>
    <recommendedName>
        <fullName evidence="7">Kyphoscoliosis peptidase</fullName>
        <ecNumber evidence="4">3.4.-.-</ecNumber>
    </recommendedName>
</protein>
<dbReference type="EC" id="3.4.-.-" evidence="4"/>
<dbReference type="EMBL" id="AJ293727">
    <property type="protein sequence ID" value="CAC12744.2"/>
    <property type="molecule type" value="mRNA"/>
</dbReference>
<dbReference type="EMBL" id="AK047076">
    <property type="protein sequence ID" value="BAC32951.1"/>
    <property type="molecule type" value="mRNA"/>
</dbReference>
<dbReference type="CCDS" id="CCDS23445.1">
    <molecule id="Q8C8H8-1"/>
</dbReference>
<dbReference type="SMR" id="Q8C8H8"/>
<dbReference type="CORUM" id="Q8C8H8"/>
<dbReference type="FunCoup" id="Q8C8H8">
    <property type="interactions" value="170"/>
</dbReference>
<dbReference type="STRING" id="10090.ENSMUSP00000036032"/>
<dbReference type="iPTMnet" id="Q8C8H8"/>
<dbReference type="PhosphoSitePlus" id="Q8C8H8"/>
<dbReference type="PaxDb" id="10090-ENSMUSP00000036032"/>
<dbReference type="ProteomicsDB" id="263475">
    <molecule id="Q8C8H8-1"/>
</dbReference>
<dbReference type="ProteomicsDB" id="263476">
    <molecule id="Q8C8H8-2"/>
</dbReference>
<dbReference type="AGR" id="MGI:96709"/>
<dbReference type="MGI" id="MGI:96709">
    <property type="gene designation" value="Ky"/>
</dbReference>
<dbReference type="eggNOG" id="KOG4575">
    <property type="taxonomic scope" value="Eukaryota"/>
</dbReference>
<dbReference type="InParanoid" id="Q8C8H8"/>
<dbReference type="OrthoDB" id="6129702at2759"/>
<dbReference type="PhylomeDB" id="Q8C8H8"/>
<dbReference type="PRO" id="PR:Q8C8H8"/>
<dbReference type="Proteomes" id="UP000000589">
    <property type="component" value="Unplaced"/>
</dbReference>
<dbReference type="RNAct" id="Q8C8H8">
    <property type="molecule type" value="protein"/>
</dbReference>
<dbReference type="GO" id="GO:0005856">
    <property type="term" value="C:cytoskeleton"/>
    <property type="evidence" value="ECO:0007669"/>
    <property type="project" value="UniProtKB-SubCell"/>
</dbReference>
<dbReference type="GO" id="GO:0030018">
    <property type="term" value="C:Z disc"/>
    <property type="evidence" value="ECO:0000314"/>
    <property type="project" value="UniProtKB"/>
</dbReference>
<dbReference type="GO" id="GO:0008233">
    <property type="term" value="F:peptidase activity"/>
    <property type="evidence" value="ECO:0007669"/>
    <property type="project" value="UniProtKB-KW"/>
</dbReference>
<dbReference type="GO" id="GO:0007517">
    <property type="term" value="P:muscle organ development"/>
    <property type="evidence" value="ECO:0000315"/>
    <property type="project" value="MGI"/>
</dbReference>
<dbReference type="GO" id="GO:0007528">
    <property type="term" value="P:neuromuscular junction development"/>
    <property type="evidence" value="ECO:0000315"/>
    <property type="project" value="MGI"/>
</dbReference>
<dbReference type="GO" id="GO:0006508">
    <property type="term" value="P:proteolysis"/>
    <property type="evidence" value="ECO:0007669"/>
    <property type="project" value="UniProtKB-KW"/>
</dbReference>
<dbReference type="FunFam" id="3.10.620.30:FF:000002">
    <property type="entry name" value="kyphoscoliosis peptidase"/>
    <property type="match status" value="1"/>
</dbReference>
<dbReference type="Gene3D" id="3.10.620.30">
    <property type="match status" value="1"/>
</dbReference>
<dbReference type="InterPro" id="IPR052557">
    <property type="entry name" value="CAP/Cytokinesis_protein"/>
</dbReference>
<dbReference type="InterPro" id="IPR056564">
    <property type="entry name" value="Ig-like_KY"/>
</dbReference>
<dbReference type="InterPro" id="IPR038765">
    <property type="entry name" value="Papain-like_cys_pep_sf"/>
</dbReference>
<dbReference type="InterPro" id="IPR002931">
    <property type="entry name" value="Transglutaminase-like"/>
</dbReference>
<dbReference type="PANTHER" id="PTHR46333">
    <property type="entry name" value="CYTOKINESIS PROTEIN 3"/>
    <property type="match status" value="1"/>
</dbReference>
<dbReference type="PANTHER" id="PTHR46333:SF3">
    <property type="entry name" value="KYPHOSCOLIOSIS PEPTIDASE"/>
    <property type="match status" value="1"/>
</dbReference>
<dbReference type="Pfam" id="PF23265">
    <property type="entry name" value="Ig-like_KY"/>
    <property type="match status" value="2"/>
</dbReference>
<dbReference type="Pfam" id="PF01841">
    <property type="entry name" value="Transglut_core"/>
    <property type="match status" value="1"/>
</dbReference>
<dbReference type="SMART" id="SM00460">
    <property type="entry name" value="TGc"/>
    <property type="match status" value="1"/>
</dbReference>
<dbReference type="SUPFAM" id="SSF54001">
    <property type="entry name" value="Cysteine proteinases"/>
    <property type="match status" value="1"/>
</dbReference>